<dbReference type="EC" id="2.7.4.25" evidence="1"/>
<dbReference type="EMBL" id="AE013598">
    <property type="protein sequence ID" value="AAW75433.1"/>
    <property type="molecule type" value="Genomic_DNA"/>
</dbReference>
<dbReference type="SMR" id="Q5H0T8"/>
<dbReference type="STRING" id="291331.XOO2179"/>
<dbReference type="KEGG" id="xoo:XOO2179"/>
<dbReference type="HOGENOM" id="CLU_079959_2_0_6"/>
<dbReference type="Proteomes" id="UP000006735">
    <property type="component" value="Chromosome"/>
</dbReference>
<dbReference type="GO" id="GO:0005737">
    <property type="term" value="C:cytoplasm"/>
    <property type="evidence" value="ECO:0007669"/>
    <property type="project" value="UniProtKB-SubCell"/>
</dbReference>
<dbReference type="GO" id="GO:0005524">
    <property type="term" value="F:ATP binding"/>
    <property type="evidence" value="ECO:0007669"/>
    <property type="project" value="UniProtKB-UniRule"/>
</dbReference>
<dbReference type="GO" id="GO:0036430">
    <property type="term" value="F:CMP kinase activity"/>
    <property type="evidence" value="ECO:0007669"/>
    <property type="project" value="RHEA"/>
</dbReference>
<dbReference type="GO" id="GO:0036431">
    <property type="term" value="F:dCMP kinase activity"/>
    <property type="evidence" value="ECO:0007669"/>
    <property type="project" value="RHEA"/>
</dbReference>
<dbReference type="GO" id="GO:0006220">
    <property type="term" value="P:pyrimidine nucleotide metabolic process"/>
    <property type="evidence" value="ECO:0007669"/>
    <property type="project" value="UniProtKB-UniRule"/>
</dbReference>
<dbReference type="CDD" id="cd02020">
    <property type="entry name" value="CMPK"/>
    <property type="match status" value="1"/>
</dbReference>
<dbReference type="FunFam" id="3.40.50.300:FF:000262">
    <property type="entry name" value="Cytidylate kinase"/>
    <property type="match status" value="1"/>
</dbReference>
<dbReference type="Gene3D" id="3.40.50.300">
    <property type="entry name" value="P-loop containing nucleotide triphosphate hydrolases"/>
    <property type="match status" value="1"/>
</dbReference>
<dbReference type="HAMAP" id="MF_00238">
    <property type="entry name" value="Cytidyl_kinase_type1"/>
    <property type="match status" value="1"/>
</dbReference>
<dbReference type="InterPro" id="IPR003136">
    <property type="entry name" value="Cytidylate_kin"/>
</dbReference>
<dbReference type="InterPro" id="IPR011994">
    <property type="entry name" value="Cytidylate_kinase_dom"/>
</dbReference>
<dbReference type="InterPro" id="IPR027417">
    <property type="entry name" value="P-loop_NTPase"/>
</dbReference>
<dbReference type="NCBIfam" id="TIGR00017">
    <property type="entry name" value="cmk"/>
    <property type="match status" value="1"/>
</dbReference>
<dbReference type="Pfam" id="PF02224">
    <property type="entry name" value="Cytidylate_kin"/>
    <property type="match status" value="1"/>
</dbReference>
<dbReference type="SUPFAM" id="SSF52540">
    <property type="entry name" value="P-loop containing nucleoside triphosphate hydrolases"/>
    <property type="match status" value="1"/>
</dbReference>
<sequence>MTDLSPVLTIDGPSGAGKGTVSRIVAARLGWHYLDSGALYRAVGVAASWADLDVSDPAALVRCTFDTKVEFDDAGEAGLRVLVNGADVTSELRLETTGALASAIAAIPEVRSALKERQRAFRRAPGLVADGRDMGTVIFPDAAFKVFLTASAEERAGRRHKQLMEKGVSVTFADLLREIMARDARDAQRVVAPLRSAKDAVLIDTSGIGVEDVVQRVVGLLADRTPS</sequence>
<proteinExistence type="inferred from homology"/>
<feature type="chain" id="PRO_1000048315" description="Cytidylate kinase">
    <location>
        <begin position="1"/>
        <end position="227"/>
    </location>
</feature>
<feature type="binding site" evidence="1">
    <location>
        <begin position="12"/>
        <end position="20"/>
    </location>
    <ligand>
        <name>ATP</name>
        <dbReference type="ChEBI" id="CHEBI:30616"/>
    </ligand>
</feature>
<keyword id="KW-0067">ATP-binding</keyword>
<keyword id="KW-0963">Cytoplasm</keyword>
<keyword id="KW-0418">Kinase</keyword>
<keyword id="KW-0547">Nucleotide-binding</keyword>
<keyword id="KW-1185">Reference proteome</keyword>
<keyword id="KW-0808">Transferase</keyword>
<protein>
    <recommendedName>
        <fullName evidence="1">Cytidylate kinase</fullName>
        <shortName evidence="1">CK</shortName>
        <ecNumber evidence="1">2.7.4.25</ecNumber>
    </recommendedName>
    <alternativeName>
        <fullName evidence="1">Cytidine monophosphate kinase</fullName>
        <shortName evidence="1">CMP kinase</shortName>
    </alternativeName>
</protein>
<organism>
    <name type="scientific">Xanthomonas oryzae pv. oryzae (strain KACC10331 / KXO85)</name>
    <dbReference type="NCBI Taxonomy" id="291331"/>
    <lineage>
        <taxon>Bacteria</taxon>
        <taxon>Pseudomonadati</taxon>
        <taxon>Pseudomonadota</taxon>
        <taxon>Gammaproteobacteria</taxon>
        <taxon>Lysobacterales</taxon>
        <taxon>Lysobacteraceae</taxon>
        <taxon>Xanthomonas</taxon>
    </lineage>
</organism>
<evidence type="ECO:0000255" key="1">
    <source>
        <dbReference type="HAMAP-Rule" id="MF_00238"/>
    </source>
</evidence>
<comment type="catalytic activity">
    <reaction evidence="1">
        <text>CMP + ATP = CDP + ADP</text>
        <dbReference type="Rhea" id="RHEA:11600"/>
        <dbReference type="ChEBI" id="CHEBI:30616"/>
        <dbReference type="ChEBI" id="CHEBI:58069"/>
        <dbReference type="ChEBI" id="CHEBI:60377"/>
        <dbReference type="ChEBI" id="CHEBI:456216"/>
        <dbReference type="EC" id="2.7.4.25"/>
    </reaction>
</comment>
<comment type="catalytic activity">
    <reaction evidence="1">
        <text>dCMP + ATP = dCDP + ADP</text>
        <dbReference type="Rhea" id="RHEA:25094"/>
        <dbReference type="ChEBI" id="CHEBI:30616"/>
        <dbReference type="ChEBI" id="CHEBI:57566"/>
        <dbReference type="ChEBI" id="CHEBI:58593"/>
        <dbReference type="ChEBI" id="CHEBI:456216"/>
        <dbReference type="EC" id="2.7.4.25"/>
    </reaction>
</comment>
<comment type="subcellular location">
    <subcellularLocation>
        <location evidence="1">Cytoplasm</location>
    </subcellularLocation>
</comment>
<comment type="similarity">
    <text evidence="1">Belongs to the cytidylate kinase family. Type 1 subfamily.</text>
</comment>
<accession>Q5H0T8</accession>
<reference key="1">
    <citation type="journal article" date="2005" name="Nucleic Acids Res.">
        <title>The genome sequence of Xanthomonas oryzae pathovar oryzae KACC10331, the bacterial blight pathogen of rice.</title>
        <authorList>
            <person name="Lee B.-M."/>
            <person name="Park Y.-J."/>
            <person name="Park D.-S."/>
            <person name="Kang H.-W."/>
            <person name="Kim J.-G."/>
            <person name="Song E.-S."/>
            <person name="Park I.-C."/>
            <person name="Yoon U.-H."/>
            <person name="Hahn J.-H."/>
            <person name="Koo B.-S."/>
            <person name="Lee G.-B."/>
            <person name="Kim H."/>
            <person name="Park H.-S."/>
            <person name="Yoon K.-O."/>
            <person name="Kim J.-H."/>
            <person name="Jung C.-H."/>
            <person name="Koh N.-H."/>
            <person name="Seo J.-S."/>
            <person name="Go S.-J."/>
        </authorList>
    </citation>
    <scope>NUCLEOTIDE SEQUENCE [LARGE SCALE GENOMIC DNA]</scope>
    <source>
        <strain>KACC10331 / KXO85</strain>
    </source>
</reference>
<gene>
    <name evidence="1" type="primary">cmk</name>
    <name type="ordered locus">XOO2179</name>
</gene>
<name>KCY_XANOR</name>